<sequence length="92" mass="10748">MDGILRKLISIKDLHHCLQKFFVDERESIIEMNDNKLSEQFDLALIETHGKSKILKNLSLFKQTMSNYLTQLSKDNMKETENTVHKIKRVAA</sequence>
<reference key="1">
    <citation type="journal article" date="1995" name="Science">
        <title>Whole-genome random sequencing and assembly of Haemophilus influenzae Rd.</title>
        <authorList>
            <person name="Fleischmann R.D."/>
            <person name="Adams M.D."/>
            <person name="White O."/>
            <person name="Clayton R.A."/>
            <person name="Kirkness E.F."/>
            <person name="Kerlavage A.R."/>
            <person name="Bult C.J."/>
            <person name="Tomb J.-F."/>
            <person name="Dougherty B.A."/>
            <person name="Merrick J.M."/>
            <person name="McKenney K."/>
            <person name="Sutton G.G."/>
            <person name="FitzHugh W."/>
            <person name="Fields C.A."/>
            <person name="Gocayne J.D."/>
            <person name="Scott J.D."/>
            <person name="Shirley R."/>
            <person name="Liu L.-I."/>
            <person name="Glodek A."/>
            <person name="Kelley J.M."/>
            <person name="Weidman J.F."/>
            <person name="Phillips C.A."/>
            <person name="Spriggs T."/>
            <person name="Hedblom E."/>
            <person name="Cotton M.D."/>
            <person name="Utterback T.R."/>
            <person name="Hanna M.C."/>
            <person name="Nguyen D.T."/>
            <person name="Saudek D.M."/>
            <person name="Brandon R.C."/>
            <person name="Fine L.D."/>
            <person name="Fritchman J.L."/>
            <person name="Fuhrmann J.L."/>
            <person name="Geoghagen N.S.M."/>
            <person name="Gnehm C.L."/>
            <person name="McDonald L.A."/>
            <person name="Small K.V."/>
            <person name="Fraser C.M."/>
            <person name="Smith H.O."/>
            <person name="Venter J.C."/>
        </authorList>
    </citation>
    <scope>NUCLEOTIDE SEQUENCE [LARGE SCALE GENOMIC DNA]</scope>
    <source>
        <strain>ATCC 51907 / DSM 11121 / KW20 / Rd</strain>
    </source>
</reference>
<organism>
    <name type="scientific">Haemophilus influenzae (strain ATCC 51907 / DSM 11121 / KW20 / Rd)</name>
    <dbReference type="NCBI Taxonomy" id="71421"/>
    <lineage>
        <taxon>Bacteria</taxon>
        <taxon>Pseudomonadati</taxon>
        <taxon>Pseudomonadota</taxon>
        <taxon>Gammaproteobacteria</taxon>
        <taxon>Pasteurellales</taxon>
        <taxon>Pasteurellaceae</taxon>
        <taxon>Haemophilus</taxon>
    </lineage>
</organism>
<feature type="chain" id="PRO_0000078104" description="Uncharacterized protein HI_1651">
    <location>
        <begin position="1"/>
        <end position="92"/>
    </location>
</feature>
<keyword id="KW-1185">Reference proteome</keyword>
<protein>
    <recommendedName>
        <fullName>Uncharacterized protein HI_1651</fullName>
    </recommendedName>
</protein>
<gene>
    <name type="ordered locus">HI_1651</name>
</gene>
<accession>P44282</accession>
<name>Y1651_HAEIN</name>
<proteinExistence type="predicted"/>
<dbReference type="EMBL" id="L42023">
    <property type="protein sequence ID" value="AAC23304.1"/>
    <property type="molecule type" value="Genomic_DNA"/>
</dbReference>
<dbReference type="PIR" id="D64039">
    <property type="entry name" value="D64039"/>
</dbReference>
<dbReference type="RefSeq" id="NP_439793.1">
    <property type="nucleotide sequence ID" value="NC_000907.1"/>
</dbReference>
<dbReference type="SMR" id="P44282"/>
<dbReference type="STRING" id="71421.HI_1651"/>
<dbReference type="EnsemblBacteria" id="AAC23304">
    <property type="protein sequence ID" value="AAC23304"/>
    <property type="gene ID" value="HI_1651"/>
</dbReference>
<dbReference type="KEGG" id="hin:HI_1651"/>
<dbReference type="PATRIC" id="fig|71421.8.peg.1727"/>
<dbReference type="eggNOG" id="COG2198">
    <property type="taxonomic scope" value="Bacteria"/>
</dbReference>
<dbReference type="HOGENOM" id="CLU_2436677_0_0_6"/>
<dbReference type="OrthoDB" id="9770795at2"/>
<dbReference type="BioCyc" id="HINF71421:G1GJ1-1668-MONOMER"/>
<dbReference type="Proteomes" id="UP000000579">
    <property type="component" value="Chromosome"/>
</dbReference>
<dbReference type="GO" id="GO:0000160">
    <property type="term" value="P:phosphorelay signal transduction system"/>
    <property type="evidence" value="ECO:0007669"/>
    <property type="project" value="InterPro"/>
</dbReference>
<dbReference type="InterPro" id="IPR036641">
    <property type="entry name" value="HPT_dom_sf"/>
</dbReference>
<dbReference type="SUPFAM" id="SSF47226">
    <property type="entry name" value="Histidine-containing phosphotransfer domain, HPT domain"/>
    <property type="match status" value="1"/>
</dbReference>